<gene>
    <name type="ordered locus">Rv1419</name>
    <name type="ORF">MTCY21B4.37</name>
</gene>
<protein>
    <recommendedName>
        <fullName>Uncharacterized protein Rv1419</fullName>
    </recommendedName>
</protein>
<name>Y1419_MYCTU</name>
<feature type="chain" id="PRO_0000103845" description="Uncharacterized protein Rv1419">
    <location>
        <begin position="1"/>
        <end position="157"/>
    </location>
</feature>
<feature type="transmembrane region" description="Helical" evidence="1">
    <location>
        <begin position="6"/>
        <end position="26"/>
    </location>
</feature>
<feature type="domain" description="Ricin B-type lectin" evidence="2">
    <location>
        <begin position="33"/>
        <end position="157"/>
    </location>
</feature>
<accession>P9WLX9</accession>
<accession>L0T9K6</accession>
<accession>P64849</accession>
<accession>P71688</accession>
<keyword id="KW-0430">Lectin</keyword>
<keyword id="KW-0472">Membrane</keyword>
<keyword id="KW-1185">Reference proteome</keyword>
<keyword id="KW-0812">Transmembrane</keyword>
<keyword id="KW-1133">Transmembrane helix</keyword>
<comment type="subcellular location">
    <subcellularLocation>
        <location evidence="3">Membrane</location>
        <topology evidence="3">Single-pass membrane protein</topology>
    </subcellularLocation>
</comment>
<proteinExistence type="evidence at protein level"/>
<reference key="1">
    <citation type="journal article" date="1998" name="Nature">
        <title>Deciphering the biology of Mycobacterium tuberculosis from the complete genome sequence.</title>
        <authorList>
            <person name="Cole S.T."/>
            <person name="Brosch R."/>
            <person name="Parkhill J."/>
            <person name="Garnier T."/>
            <person name="Churcher C.M."/>
            <person name="Harris D.E."/>
            <person name="Gordon S.V."/>
            <person name="Eiglmeier K."/>
            <person name="Gas S."/>
            <person name="Barry C.E. III"/>
            <person name="Tekaia F."/>
            <person name="Badcock K."/>
            <person name="Basham D."/>
            <person name="Brown D."/>
            <person name="Chillingworth T."/>
            <person name="Connor R."/>
            <person name="Davies R.M."/>
            <person name="Devlin K."/>
            <person name="Feltwell T."/>
            <person name="Gentles S."/>
            <person name="Hamlin N."/>
            <person name="Holroyd S."/>
            <person name="Hornsby T."/>
            <person name="Jagels K."/>
            <person name="Krogh A."/>
            <person name="McLean J."/>
            <person name="Moule S."/>
            <person name="Murphy L.D."/>
            <person name="Oliver S."/>
            <person name="Osborne J."/>
            <person name="Quail M.A."/>
            <person name="Rajandream M.A."/>
            <person name="Rogers J."/>
            <person name="Rutter S."/>
            <person name="Seeger K."/>
            <person name="Skelton S."/>
            <person name="Squares S."/>
            <person name="Squares R."/>
            <person name="Sulston J.E."/>
            <person name="Taylor K."/>
            <person name="Whitehead S."/>
            <person name="Barrell B.G."/>
        </authorList>
    </citation>
    <scope>NUCLEOTIDE SEQUENCE [LARGE SCALE GENOMIC DNA]</scope>
    <source>
        <strain>ATCC 25618 / H37Rv</strain>
    </source>
</reference>
<reference key="2">
    <citation type="journal article" date="2011" name="Mol. Cell. Proteomics">
        <title>Proteogenomic analysis of Mycobacterium tuberculosis by high resolution mass spectrometry.</title>
        <authorList>
            <person name="Kelkar D.S."/>
            <person name="Kumar D."/>
            <person name="Kumar P."/>
            <person name="Balakrishnan L."/>
            <person name="Muthusamy B."/>
            <person name="Yadav A.K."/>
            <person name="Shrivastava P."/>
            <person name="Marimuthu A."/>
            <person name="Anand S."/>
            <person name="Sundaram H."/>
            <person name="Kingsbury R."/>
            <person name="Harsha H.C."/>
            <person name="Nair B."/>
            <person name="Prasad T.S."/>
            <person name="Chauhan D.S."/>
            <person name="Katoch K."/>
            <person name="Katoch V.M."/>
            <person name="Kumar P."/>
            <person name="Chaerkady R."/>
            <person name="Ramachandran S."/>
            <person name="Dash D."/>
            <person name="Pandey A."/>
        </authorList>
    </citation>
    <scope>IDENTIFICATION BY MASS SPECTROMETRY [LARGE SCALE ANALYSIS]</scope>
    <source>
        <strain>ATCC 25618 / H37Rv</strain>
    </source>
</reference>
<organism>
    <name type="scientific">Mycobacterium tuberculosis (strain ATCC 25618 / H37Rv)</name>
    <dbReference type="NCBI Taxonomy" id="83332"/>
    <lineage>
        <taxon>Bacteria</taxon>
        <taxon>Bacillati</taxon>
        <taxon>Actinomycetota</taxon>
        <taxon>Actinomycetes</taxon>
        <taxon>Mycobacteriales</taxon>
        <taxon>Mycobacteriaceae</taxon>
        <taxon>Mycobacterium</taxon>
        <taxon>Mycobacterium tuberculosis complex</taxon>
    </lineage>
</organism>
<evidence type="ECO:0000255" key="1"/>
<evidence type="ECO:0000255" key="2">
    <source>
        <dbReference type="PROSITE-ProRule" id="PRU00174"/>
    </source>
</evidence>
<evidence type="ECO:0000305" key="3"/>
<sequence length="157" mass="16853">MGELRLVGGVLRVLVVVGAVFDVAVLNAGAASADGPVQLKSRLGDVCLDAPSGSWFSPLVINPCNGTDFQRWNLTDDRQVESVAFPGECVNIGNALWARLQPCVNWISQHWTVQPDGLVKSDLDACLTVLGGPDPGTWVSTRWCDPNAPDQQWDSVP</sequence>
<dbReference type="EMBL" id="AL123456">
    <property type="protein sequence ID" value="CCP44178.1"/>
    <property type="molecule type" value="Genomic_DNA"/>
</dbReference>
<dbReference type="PIR" id="H70902">
    <property type="entry name" value="H70902"/>
</dbReference>
<dbReference type="RefSeq" id="NP_215935.1">
    <property type="nucleotide sequence ID" value="NC_000962.3"/>
</dbReference>
<dbReference type="RefSeq" id="WP_003407345.1">
    <property type="nucleotide sequence ID" value="NZ_NVQJ01000038.1"/>
</dbReference>
<dbReference type="SMR" id="P9WLX9"/>
<dbReference type="STRING" id="83332.Rv1419"/>
<dbReference type="PaxDb" id="83332-Rv1419"/>
<dbReference type="GeneID" id="886683"/>
<dbReference type="KEGG" id="mtu:Rv1419"/>
<dbReference type="KEGG" id="mtv:RVBD_1419"/>
<dbReference type="TubercuList" id="Rv1419"/>
<dbReference type="eggNOG" id="ENOG5031JXW">
    <property type="taxonomic scope" value="Bacteria"/>
</dbReference>
<dbReference type="InParanoid" id="P9WLX9"/>
<dbReference type="OrthoDB" id="4192775at2"/>
<dbReference type="Proteomes" id="UP000001584">
    <property type="component" value="Chromosome"/>
</dbReference>
<dbReference type="GO" id="GO:0005576">
    <property type="term" value="C:extracellular region"/>
    <property type="evidence" value="ECO:0007005"/>
    <property type="project" value="MTBBASE"/>
</dbReference>
<dbReference type="GO" id="GO:0016020">
    <property type="term" value="C:membrane"/>
    <property type="evidence" value="ECO:0007669"/>
    <property type="project" value="UniProtKB-SubCell"/>
</dbReference>
<dbReference type="GO" id="GO:0030246">
    <property type="term" value="F:carbohydrate binding"/>
    <property type="evidence" value="ECO:0007669"/>
    <property type="project" value="UniProtKB-KW"/>
</dbReference>
<dbReference type="CDD" id="cd00161">
    <property type="entry name" value="beta-trefoil_Ricin-like"/>
    <property type="match status" value="1"/>
</dbReference>
<dbReference type="Gene3D" id="2.80.10.50">
    <property type="match status" value="2"/>
</dbReference>
<dbReference type="InterPro" id="IPR035992">
    <property type="entry name" value="Ricin_B-like_lectins"/>
</dbReference>
<dbReference type="InterPro" id="IPR000772">
    <property type="entry name" value="Ricin_B_lectin"/>
</dbReference>
<dbReference type="Pfam" id="PF00652">
    <property type="entry name" value="Ricin_B_lectin"/>
    <property type="match status" value="1"/>
</dbReference>
<dbReference type="SMART" id="SM00458">
    <property type="entry name" value="RICIN"/>
    <property type="match status" value="1"/>
</dbReference>
<dbReference type="SUPFAM" id="SSF50370">
    <property type="entry name" value="Ricin B-like lectins"/>
    <property type="match status" value="1"/>
</dbReference>
<dbReference type="PROSITE" id="PS50231">
    <property type="entry name" value="RICIN_B_LECTIN"/>
    <property type="match status" value="1"/>
</dbReference>